<reference key="1">
    <citation type="journal article" date="2010" name="Genome Biol.">
        <title>Structure and dynamics of the pan-genome of Streptococcus pneumoniae and closely related species.</title>
        <authorList>
            <person name="Donati C."/>
            <person name="Hiller N.L."/>
            <person name="Tettelin H."/>
            <person name="Muzzi A."/>
            <person name="Croucher N.J."/>
            <person name="Angiuoli S.V."/>
            <person name="Oggioni M."/>
            <person name="Dunning Hotopp J.C."/>
            <person name="Hu F.Z."/>
            <person name="Riley D.R."/>
            <person name="Covacci A."/>
            <person name="Mitchell T.J."/>
            <person name="Bentley S.D."/>
            <person name="Kilian M."/>
            <person name="Ehrlich G.D."/>
            <person name="Rappuoli R."/>
            <person name="Moxon E.R."/>
            <person name="Masignani V."/>
        </authorList>
    </citation>
    <scope>NUCLEOTIDE SEQUENCE [LARGE SCALE GENOMIC DNA]</scope>
    <source>
        <strain>70585</strain>
    </source>
</reference>
<accession>C1C6R4</accession>
<dbReference type="EC" id="1.2.1.41" evidence="1"/>
<dbReference type="EMBL" id="CP000918">
    <property type="protein sequence ID" value="ACO17191.1"/>
    <property type="molecule type" value="Genomic_DNA"/>
</dbReference>
<dbReference type="RefSeq" id="WP_000254680.1">
    <property type="nucleotide sequence ID" value="NC_012468.1"/>
</dbReference>
<dbReference type="SMR" id="C1C6R4"/>
<dbReference type="KEGG" id="snm:SP70585_0971"/>
<dbReference type="HOGENOM" id="CLU_030231_0_0_9"/>
<dbReference type="UniPathway" id="UPA00098">
    <property type="reaction ID" value="UER00360"/>
</dbReference>
<dbReference type="Proteomes" id="UP000002211">
    <property type="component" value="Chromosome"/>
</dbReference>
<dbReference type="GO" id="GO:0005737">
    <property type="term" value="C:cytoplasm"/>
    <property type="evidence" value="ECO:0007669"/>
    <property type="project" value="UniProtKB-SubCell"/>
</dbReference>
<dbReference type="GO" id="GO:0004350">
    <property type="term" value="F:glutamate-5-semialdehyde dehydrogenase activity"/>
    <property type="evidence" value="ECO:0007669"/>
    <property type="project" value="UniProtKB-UniRule"/>
</dbReference>
<dbReference type="GO" id="GO:0050661">
    <property type="term" value="F:NADP binding"/>
    <property type="evidence" value="ECO:0007669"/>
    <property type="project" value="InterPro"/>
</dbReference>
<dbReference type="GO" id="GO:0055129">
    <property type="term" value="P:L-proline biosynthetic process"/>
    <property type="evidence" value="ECO:0007669"/>
    <property type="project" value="UniProtKB-UniRule"/>
</dbReference>
<dbReference type="CDD" id="cd07079">
    <property type="entry name" value="ALDH_F18-19_ProA-GPR"/>
    <property type="match status" value="1"/>
</dbReference>
<dbReference type="FunFam" id="3.40.309.10:FF:000006">
    <property type="entry name" value="Gamma-glutamyl phosphate reductase"/>
    <property type="match status" value="1"/>
</dbReference>
<dbReference type="Gene3D" id="3.40.605.10">
    <property type="entry name" value="Aldehyde Dehydrogenase, Chain A, domain 1"/>
    <property type="match status" value="1"/>
</dbReference>
<dbReference type="Gene3D" id="3.40.309.10">
    <property type="entry name" value="Aldehyde Dehydrogenase, Chain A, domain 2"/>
    <property type="match status" value="1"/>
</dbReference>
<dbReference type="HAMAP" id="MF_00412">
    <property type="entry name" value="ProA"/>
    <property type="match status" value="1"/>
</dbReference>
<dbReference type="InterPro" id="IPR016161">
    <property type="entry name" value="Ald_DH/histidinol_DH"/>
</dbReference>
<dbReference type="InterPro" id="IPR016163">
    <property type="entry name" value="Ald_DH_C"/>
</dbReference>
<dbReference type="InterPro" id="IPR016162">
    <property type="entry name" value="Ald_DH_N"/>
</dbReference>
<dbReference type="InterPro" id="IPR015590">
    <property type="entry name" value="Aldehyde_DH_dom"/>
</dbReference>
<dbReference type="InterPro" id="IPR020593">
    <property type="entry name" value="G-glutamylP_reductase_CS"/>
</dbReference>
<dbReference type="InterPro" id="IPR012134">
    <property type="entry name" value="Glu-5-SA_DH"/>
</dbReference>
<dbReference type="InterPro" id="IPR000965">
    <property type="entry name" value="GPR_dom"/>
</dbReference>
<dbReference type="NCBIfam" id="NF001221">
    <property type="entry name" value="PRK00197.1"/>
    <property type="match status" value="1"/>
</dbReference>
<dbReference type="NCBIfam" id="TIGR00407">
    <property type="entry name" value="proA"/>
    <property type="match status" value="1"/>
</dbReference>
<dbReference type="PANTHER" id="PTHR11063:SF8">
    <property type="entry name" value="DELTA-1-PYRROLINE-5-CARBOXYLATE SYNTHASE"/>
    <property type="match status" value="1"/>
</dbReference>
<dbReference type="PANTHER" id="PTHR11063">
    <property type="entry name" value="GLUTAMATE SEMIALDEHYDE DEHYDROGENASE"/>
    <property type="match status" value="1"/>
</dbReference>
<dbReference type="Pfam" id="PF00171">
    <property type="entry name" value="Aldedh"/>
    <property type="match status" value="1"/>
</dbReference>
<dbReference type="PIRSF" id="PIRSF000151">
    <property type="entry name" value="GPR"/>
    <property type="match status" value="1"/>
</dbReference>
<dbReference type="SUPFAM" id="SSF53720">
    <property type="entry name" value="ALDH-like"/>
    <property type="match status" value="1"/>
</dbReference>
<dbReference type="PROSITE" id="PS01223">
    <property type="entry name" value="PROA"/>
    <property type="match status" value="1"/>
</dbReference>
<keyword id="KW-0028">Amino-acid biosynthesis</keyword>
<keyword id="KW-0963">Cytoplasm</keyword>
<keyword id="KW-0521">NADP</keyword>
<keyword id="KW-0560">Oxidoreductase</keyword>
<keyword id="KW-0641">Proline biosynthesis</keyword>
<evidence type="ECO:0000255" key="1">
    <source>
        <dbReference type="HAMAP-Rule" id="MF_00412"/>
    </source>
</evidence>
<gene>
    <name evidence="1" type="primary">proA</name>
    <name type="ordered locus">SP70585_0971</name>
</gene>
<name>PROA_STRP7</name>
<comment type="function">
    <text evidence="1">Catalyzes the NADPH-dependent reduction of L-glutamate 5-phosphate into L-glutamate 5-semialdehyde and phosphate. The product spontaneously undergoes cyclization to form 1-pyrroline-5-carboxylate.</text>
</comment>
<comment type="catalytic activity">
    <reaction evidence="1">
        <text>L-glutamate 5-semialdehyde + phosphate + NADP(+) = L-glutamyl 5-phosphate + NADPH + H(+)</text>
        <dbReference type="Rhea" id="RHEA:19541"/>
        <dbReference type="ChEBI" id="CHEBI:15378"/>
        <dbReference type="ChEBI" id="CHEBI:43474"/>
        <dbReference type="ChEBI" id="CHEBI:57783"/>
        <dbReference type="ChEBI" id="CHEBI:58066"/>
        <dbReference type="ChEBI" id="CHEBI:58274"/>
        <dbReference type="ChEBI" id="CHEBI:58349"/>
        <dbReference type="EC" id="1.2.1.41"/>
    </reaction>
</comment>
<comment type="pathway">
    <text evidence="1">Amino-acid biosynthesis; L-proline biosynthesis; L-glutamate 5-semialdehyde from L-glutamate: step 2/2.</text>
</comment>
<comment type="subcellular location">
    <subcellularLocation>
        <location evidence="1">Cytoplasm</location>
    </subcellularLocation>
</comment>
<comment type="similarity">
    <text evidence="1">Belongs to the gamma-glutamyl phosphate reductase family.</text>
</comment>
<sequence>MVSRQEQFEQVQAVKKSINTASEEVKNQALLAMADHLVAATEEILAANALDMAAAKGKISDVMLDRLYLDADRIEAMARGIREVVALPDPIGEVLETSQLENGLVITKKRVAMGVIGIIYESRPNVTSDAAALTLKSGNAVVLRSGKDAYQTTHAIVTALKKGLETTTIHPNVIQLVEDTSRESSYAMMKAKGYLDLLIPRGGAGLINAVVENAIVPVIETGTGIVHVYVDKDADEDKALSIINNAKTSRPSVCNAMEILLVHENKAASILPRLDQMLVAERKEAGLEPIQFRLDSKASQFVSGQAAETQDFDTEFLDYVLAVKVVSSLEEAVAHIESHSTHHSDAIVTENAEAAAYFTDQVDSAAVYVNASTRFTDGGQFGLGCEMGISTQKLHARGPMGLKELTSYKYVVAGDGQIRE</sequence>
<protein>
    <recommendedName>
        <fullName evidence="1">Gamma-glutamyl phosphate reductase</fullName>
        <shortName evidence="1">GPR</shortName>
        <ecNumber evidence="1">1.2.1.41</ecNumber>
    </recommendedName>
    <alternativeName>
        <fullName evidence="1">Glutamate-5-semialdehyde dehydrogenase</fullName>
    </alternativeName>
    <alternativeName>
        <fullName evidence="1">Glutamyl-gamma-semialdehyde dehydrogenase</fullName>
        <shortName evidence="1">GSA dehydrogenase</shortName>
    </alternativeName>
</protein>
<organism>
    <name type="scientific">Streptococcus pneumoniae (strain 70585)</name>
    <dbReference type="NCBI Taxonomy" id="488221"/>
    <lineage>
        <taxon>Bacteria</taxon>
        <taxon>Bacillati</taxon>
        <taxon>Bacillota</taxon>
        <taxon>Bacilli</taxon>
        <taxon>Lactobacillales</taxon>
        <taxon>Streptococcaceae</taxon>
        <taxon>Streptococcus</taxon>
    </lineage>
</organism>
<feature type="chain" id="PRO_1000193656" description="Gamma-glutamyl phosphate reductase">
    <location>
        <begin position="1"/>
        <end position="420"/>
    </location>
</feature>
<proteinExistence type="inferred from homology"/>